<feature type="transit peptide" description="Chloroplast" evidence="1">
    <location>
        <begin position="1"/>
        <end position="53"/>
    </location>
</feature>
<feature type="chain" id="PRO_0000029873" description="Phosphoribosylaminoimidazole-succinocarboxamide synthase, chloroplastic">
    <location>
        <begin position="54"/>
        <end position="411"/>
    </location>
</feature>
<feature type="sequence conflict" description="In Ref. 1; AAA16231." evidence="2" ref="1">
    <original>S</original>
    <variation>C</variation>
    <location>
        <position position="91"/>
    </location>
</feature>
<feature type="sequence conflict" description="In Ref. 1; AAA16231." evidence="2" ref="1">
    <original>IVS</original>
    <variation>MLY</variation>
    <location>
        <begin position="168"/>
        <end position="170"/>
    </location>
</feature>
<dbReference type="EC" id="6.3.2.6"/>
<dbReference type="EMBL" id="U05599">
    <property type="protein sequence ID" value="AAA16231.1"/>
    <property type="molecule type" value="Unassigned_DNA"/>
</dbReference>
<dbReference type="EMBL" id="AP000604">
    <property type="protein sequence ID" value="BAB01454.1"/>
    <property type="molecule type" value="Genomic_DNA"/>
</dbReference>
<dbReference type="EMBL" id="CP002686">
    <property type="protein sequence ID" value="AEE76462.1"/>
    <property type="molecule type" value="Genomic_DNA"/>
</dbReference>
<dbReference type="EMBL" id="CP002686">
    <property type="protein sequence ID" value="AEE76463.1"/>
    <property type="molecule type" value="Genomic_DNA"/>
</dbReference>
<dbReference type="EMBL" id="CP002686">
    <property type="protein sequence ID" value="ANM63435.1"/>
    <property type="molecule type" value="Genomic_DNA"/>
</dbReference>
<dbReference type="EMBL" id="AY080627">
    <property type="protein sequence ID" value="AAL85973.1"/>
    <property type="molecule type" value="mRNA"/>
</dbReference>
<dbReference type="EMBL" id="BT002734">
    <property type="protein sequence ID" value="AAO22563.1"/>
    <property type="molecule type" value="mRNA"/>
</dbReference>
<dbReference type="RefSeq" id="NP_001030739.1">
    <property type="nucleotide sequence ID" value="NM_001035662.2"/>
</dbReference>
<dbReference type="RefSeq" id="NP_001319605.1">
    <property type="nucleotide sequence ID" value="NM_001338505.1"/>
</dbReference>
<dbReference type="RefSeq" id="NP_188748.1">
    <property type="nucleotide sequence ID" value="NM_113005.4"/>
</dbReference>
<dbReference type="SMR" id="P38025"/>
<dbReference type="FunCoup" id="P38025">
    <property type="interactions" value="1467"/>
</dbReference>
<dbReference type="IntAct" id="P38025">
    <property type="interactions" value="2"/>
</dbReference>
<dbReference type="STRING" id="3702.P38025"/>
<dbReference type="iPTMnet" id="P38025"/>
<dbReference type="PaxDb" id="3702-AT3G21110.1"/>
<dbReference type="ProteomicsDB" id="226088"/>
<dbReference type="EnsemblPlants" id="AT3G21110.1">
    <property type="protein sequence ID" value="AT3G21110.1"/>
    <property type="gene ID" value="AT3G21110"/>
</dbReference>
<dbReference type="EnsemblPlants" id="AT3G21110.2">
    <property type="protein sequence ID" value="AT3G21110.2"/>
    <property type="gene ID" value="AT3G21110"/>
</dbReference>
<dbReference type="EnsemblPlants" id="AT3G21110.3">
    <property type="protein sequence ID" value="AT3G21110.3"/>
    <property type="gene ID" value="AT3G21110"/>
</dbReference>
<dbReference type="GeneID" id="821663"/>
<dbReference type="Gramene" id="AT3G21110.1">
    <property type="protein sequence ID" value="AT3G21110.1"/>
    <property type="gene ID" value="AT3G21110"/>
</dbReference>
<dbReference type="Gramene" id="AT3G21110.2">
    <property type="protein sequence ID" value="AT3G21110.2"/>
    <property type="gene ID" value="AT3G21110"/>
</dbReference>
<dbReference type="Gramene" id="AT3G21110.3">
    <property type="protein sequence ID" value="AT3G21110.3"/>
    <property type="gene ID" value="AT3G21110"/>
</dbReference>
<dbReference type="KEGG" id="ath:AT3G21110"/>
<dbReference type="Araport" id="AT3G21110"/>
<dbReference type="TAIR" id="AT3G21110">
    <property type="gene designation" value="PUR7"/>
</dbReference>
<dbReference type="eggNOG" id="KOG2835">
    <property type="taxonomic scope" value="Eukaryota"/>
</dbReference>
<dbReference type="HOGENOM" id="CLU_045637_2_0_1"/>
<dbReference type="InParanoid" id="P38025"/>
<dbReference type="OMA" id="CEPFKVE"/>
<dbReference type="OrthoDB" id="9991235at2759"/>
<dbReference type="PhylomeDB" id="P38025"/>
<dbReference type="BioCyc" id="ARA:AT3G21110-MONOMER"/>
<dbReference type="UniPathway" id="UPA00074">
    <property type="reaction ID" value="UER00131"/>
</dbReference>
<dbReference type="CD-CODE" id="4299E36E">
    <property type="entry name" value="Nucleolus"/>
</dbReference>
<dbReference type="PRO" id="PR:P38025"/>
<dbReference type="Proteomes" id="UP000006548">
    <property type="component" value="Chromosome 3"/>
</dbReference>
<dbReference type="ExpressionAtlas" id="P38025">
    <property type="expression patterns" value="baseline and differential"/>
</dbReference>
<dbReference type="GO" id="GO:0009507">
    <property type="term" value="C:chloroplast"/>
    <property type="evidence" value="ECO:0007005"/>
    <property type="project" value="TAIR"/>
</dbReference>
<dbReference type="GO" id="GO:0009570">
    <property type="term" value="C:chloroplast stroma"/>
    <property type="evidence" value="ECO:0007005"/>
    <property type="project" value="TAIR"/>
</dbReference>
<dbReference type="GO" id="GO:0005524">
    <property type="term" value="F:ATP binding"/>
    <property type="evidence" value="ECO:0007669"/>
    <property type="project" value="UniProtKB-KW"/>
</dbReference>
<dbReference type="GO" id="GO:0004639">
    <property type="term" value="F:phosphoribosylaminoimidazolesuccinocarboxamide synthase activity"/>
    <property type="evidence" value="ECO:0007669"/>
    <property type="project" value="UniProtKB-EC"/>
</dbReference>
<dbReference type="GO" id="GO:0006189">
    <property type="term" value="P:'de novo' IMP biosynthetic process"/>
    <property type="evidence" value="ECO:0007669"/>
    <property type="project" value="UniProtKB-UniPathway"/>
</dbReference>
<dbReference type="GO" id="GO:0009733">
    <property type="term" value="P:response to auxin"/>
    <property type="evidence" value="ECO:0000314"/>
    <property type="project" value="TAIR"/>
</dbReference>
<dbReference type="CDD" id="cd01414">
    <property type="entry name" value="SAICAR_synt_Sc"/>
    <property type="match status" value="1"/>
</dbReference>
<dbReference type="FunFam" id="3.30.200.20:FF:000199">
    <property type="entry name" value="Phosphoribosylaminoimidazole-succinocarboxamide synthase"/>
    <property type="match status" value="1"/>
</dbReference>
<dbReference type="FunFam" id="3.30.470.20:FF:000015">
    <property type="entry name" value="Phosphoribosylaminoimidazole-succinocarboxamide synthase"/>
    <property type="match status" value="1"/>
</dbReference>
<dbReference type="Gene3D" id="3.30.470.20">
    <property type="entry name" value="ATP-grasp fold, B domain"/>
    <property type="match status" value="1"/>
</dbReference>
<dbReference type="Gene3D" id="3.30.200.20">
    <property type="entry name" value="Phosphorylase Kinase, domain 1"/>
    <property type="match status" value="1"/>
</dbReference>
<dbReference type="HAMAP" id="MF_00137">
    <property type="entry name" value="SAICAR_synth"/>
    <property type="match status" value="1"/>
</dbReference>
<dbReference type="InterPro" id="IPR028923">
    <property type="entry name" value="SAICAR_synt/ADE2_N"/>
</dbReference>
<dbReference type="InterPro" id="IPR018236">
    <property type="entry name" value="SAICAR_synthetase_CS"/>
</dbReference>
<dbReference type="NCBIfam" id="NF009251">
    <property type="entry name" value="PRK12607.1"/>
    <property type="match status" value="1"/>
</dbReference>
<dbReference type="PANTHER" id="PTHR43700">
    <property type="entry name" value="PHOSPHORIBOSYLAMINOIMIDAZOLE-SUCCINOCARBOXAMIDE SYNTHASE"/>
    <property type="match status" value="1"/>
</dbReference>
<dbReference type="PANTHER" id="PTHR43700:SF1">
    <property type="entry name" value="PHOSPHORIBOSYLAMINOIMIDAZOLE-SUCCINOCARBOXAMIDE SYNTHASE"/>
    <property type="match status" value="1"/>
</dbReference>
<dbReference type="Pfam" id="PF01259">
    <property type="entry name" value="SAICAR_synt"/>
    <property type="match status" value="1"/>
</dbReference>
<dbReference type="SUPFAM" id="SSF56104">
    <property type="entry name" value="SAICAR synthase-like"/>
    <property type="match status" value="1"/>
</dbReference>
<dbReference type="PROSITE" id="PS01057">
    <property type="entry name" value="SAICAR_SYNTHETASE_1"/>
    <property type="match status" value="1"/>
</dbReference>
<dbReference type="PROSITE" id="PS01058">
    <property type="entry name" value="SAICAR_SYNTHETASE_2"/>
    <property type="match status" value="1"/>
</dbReference>
<reference key="1">
    <citation type="journal article" date="1996" name="Plant Physiol.">
        <title>De novo purine synthesis in Arabidopsis thaliana. II. The PUR7 gene encoding 5'-phosphoribosyl-4-(N-succinocarboxamide)-5-aminoimidazole synthetase is expressed in rapidly dividing tissues.</title>
        <authorList>
            <person name="Senecoff J.F."/>
            <person name="McKinney E.C."/>
            <person name="Meagher R.B."/>
        </authorList>
    </citation>
    <scope>NUCLEOTIDE SEQUENCE [GENOMIC DNA]</scope>
    <source>
        <strain>cv. Columbia</strain>
        <tissue>Leaf</tissue>
    </source>
</reference>
<reference key="2">
    <citation type="journal article" date="2000" name="DNA Res.">
        <title>Structural analysis of Arabidopsis thaliana chromosome 3. II. Sequence features of the 4,251,695 bp regions covered by 90 P1, TAC and BAC clones.</title>
        <authorList>
            <person name="Kaneko T."/>
            <person name="Katoh T."/>
            <person name="Sato S."/>
            <person name="Nakamura Y."/>
            <person name="Asamizu E."/>
            <person name="Tabata S."/>
        </authorList>
    </citation>
    <scope>NUCLEOTIDE SEQUENCE [LARGE SCALE GENOMIC DNA]</scope>
    <source>
        <strain>cv. Columbia</strain>
    </source>
</reference>
<reference key="3">
    <citation type="journal article" date="2017" name="Plant J.">
        <title>Araport11: a complete reannotation of the Arabidopsis thaliana reference genome.</title>
        <authorList>
            <person name="Cheng C.Y."/>
            <person name="Krishnakumar V."/>
            <person name="Chan A.P."/>
            <person name="Thibaud-Nissen F."/>
            <person name="Schobel S."/>
            <person name="Town C.D."/>
        </authorList>
    </citation>
    <scope>GENOME REANNOTATION</scope>
    <source>
        <strain>cv. Columbia</strain>
    </source>
</reference>
<reference key="4">
    <citation type="journal article" date="2003" name="Science">
        <title>Empirical analysis of transcriptional activity in the Arabidopsis genome.</title>
        <authorList>
            <person name="Yamada K."/>
            <person name="Lim J."/>
            <person name="Dale J.M."/>
            <person name="Chen H."/>
            <person name="Shinn P."/>
            <person name="Palm C.J."/>
            <person name="Southwick A.M."/>
            <person name="Wu H.C."/>
            <person name="Kim C.J."/>
            <person name="Nguyen M."/>
            <person name="Pham P.K."/>
            <person name="Cheuk R.F."/>
            <person name="Karlin-Newmann G."/>
            <person name="Liu S.X."/>
            <person name="Lam B."/>
            <person name="Sakano H."/>
            <person name="Wu T."/>
            <person name="Yu G."/>
            <person name="Miranda M."/>
            <person name="Quach H.L."/>
            <person name="Tripp M."/>
            <person name="Chang C.H."/>
            <person name="Lee J.M."/>
            <person name="Toriumi M.J."/>
            <person name="Chan M.M."/>
            <person name="Tang C.C."/>
            <person name="Onodera C.S."/>
            <person name="Deng J.M."/>
            <person name="Akiyama K."/>
            <person name="Ansari Y."/>
            <person name="Arakawa T."/>
            <person name="Banh J."/>
            <person name="Banno F."/>
            <person name="Bowser L."/>
            <person name="Brooks S.Y."/>
            <person name="Carninci P."/>
            <person name="Chao Q."/>
            <person name="Choy N."/>
            <person name="Enju A."/>
            <person name="Goldsmith A.D."/>
            <person name="Gurjal M."/>
            <person name="Hansen N.F."/>
            <person name="Hayashizaki Y."/>
            <person name="Johnson-Hopson C."/>
            <person name="Hsuan V.W."/>
            <person name="Iida K."/>
            <person name="Karnes M."/>
            <person name="Khan S."/>
            <person name="Koesema E."/>
            <person name="Ishida J."/>
            <person name="Jiang P.X."/>
            <person name="Jones T."/>
            <person name="Kawai J."/>
            <person name="Kamiya A."/>
            <person name="Meyers C."/>
            <person name="Nakajima M."/>
            <person name="Narusaka M."/>
            <person name="Seki M."/>
            <person name="Sakurai T."/>
            <person name="Satou M."/>
            <person name="Tamse R."/>
            <person name="Vaysberg M."/>
            <person name="Wallender E.K."/>
            <person name="Wong C."/>
            <person name="Yamamura Y."/>
            <person name="Yuan S."/>
            <person name="Shinozaki K."/>
            <person name="Davis R.W."/>
            <person name="Theologis A."/>
            <person name="Ecker J.R."/>
        </authorList>
    </citation>
    <scope>NUCLEOTIDE SEQUENCE [LARGE SCALE MRNA]</scope>
    <source>
        <strain>cv. Columbia</strain>
    </source>
</reference>
<proteinExistence type="evidence at transcript level"/>
<protein>
    <recommendedName>
        <fullName>Phosphoribosylaminoimidazole-succinocarboxamide synthase, chloroplastic</fullName>
        <ecNumber>6.3.2.6</ecNumber>
    </recommendedName>
    <alternativeName>
        <fullName>SAICAR synthetase</fullName>
    </alternativeName>
</protein>
<accession>P38025</accession>
<accession>Q8RXX4</accession>
<accession>Q9LJC1</accession>
<evidence type="ECO:0000255" key="1"/>
<evidence type="ECO:0000305" key="2"/>
<sequence length="411" mass="46063">MAQCVRSTLNPVRTPQSFTRKAYVKSPAFASVSFLRAVPEFNKYPKPCSLVMSCQGKAQNQQEERPQLSLDDLVTSNRKGEVLGTIKDSLSNCLSETNLLATVPGLKSRIKGKVRDIYDAGDYLVLITTDRLSAFDRNLASIPFKGQVLNETSLWWFNNTQHITPNAIVSSPDRNVVIAKKCSVFPIEFVVRGYVTGSTDTSLWTVYNKGVRNYCGNELSDGLVKNQKLPANILTPTTKAADHDVPISPNEIVEGGFMTQAEFDEASMKALSLFEFGQGVAKKHGLILVDTKYEFGRSSDGSILLIDEIHTPDSSRYWLAGSYEERFQKGLEPENVDKEFLRLWFKENCNPYEDEVLPAAPAELVTELAWRYIFLYETITGSRIDIIPTQEPIHDRISRNTSQALSSLRQL</sequence>
<gene>
    <name type="primary">PUR7</name>
    <name type="ordered locus">At3g21110</name>
    <name type="ORF">MSA6.15</name>
    <name type="ORF">MSA6.26</name>
</gene>
<keyword id="KW-0067">ATP-binding</keyword>
<keyword id="KW-0150">Chloroplast</keyword>
<keyword id="KW-0436">Ligase</keyword>
<keyword id="KW-0547">Nucleotide-binding</keyword>
<keyword id="KW-0934">Plastid</keyword>
<keyword id="KW-0658">Purine biosynthesis</keyword>
<keyword id="KW-1185">Reference proteome</keyword>
<keyword id="KW-0809">Transit peptide</keyword>
<name>PUR7_ARATH</name>
<organism>
    <name type="scientific">Arabidopsis thaliana</name>
    <name type="common">Mouse-ear cress</name>
    <dbReference type="NCBI Taxonomy" id="3702"/>
    <lineage>
        <taxon>Eukaryota</taxon>
        <taxon>Viridiplantae</taxon>
        <taxon>Streptophyta</taxon>
        <taxon>Embryophyta</taxon>
        <taxon>Tracheophyta</taxon>
        <taxon>Spermatophyta</taxon>
        <taxon>Magnoliopsida</taxon>
        <taxon>eudicotyledons</taxon>
        <taxon>Gunneridae</taxon>
        <taxon>Pentapetalae</taxon>
        <taxon>rosids</taxon>
        <taxon>malvids</taxon>
        <taxon>Brassicales</taxon>
        <taxon>Brassicaceae</taxon>
        <taxon>Camelineae</taxon>
        <taxon>Arabidopsis</taxon>
    </lineage>
</organism>
<comment type="catalytic activity">
    <reaction>
        <text>5-amino-1-(5-phospho-D-ribosyl)imidazole-4-carboxylate + L-aspartate + ATP = (2S)-2-[5-amino-1-(5-phospho-beta-D-ribosyl)imidazole-4-carboxamido]succinate + ADP + phosphate + 2 H(+)</text>
        <dbReference type="Rhea" id="RHEA:22628"/>
        <dbReference type="ChEBI" id="CHEBI:15378"/>
        <dbReference type="ChEBI" id="CHEBI:29991"/>
        <dbReference type="ChEBI" id="CHEBI:30616"/>
        <dbReference type="ChEBI" id="CHEBI:43474"/>
        <dbReference type="ChEBI" id="CHEBI:58443"/>
        <dbReference type="ChEBI" id="CHEBI:77657"/>
        <dbReference type="ChEBI" id="CHEBI:456216"/>
        <dbReference type="EC" id="6.3.2.6"/>
    </reaction>
</comment>
<comment type="pathway">
    <text>Purine metabolism; IMP biosynthesis via de novo pathway; 5-amino-1-(5-phospho-D-ribosyl)imidazole-4-carboxamide from 5-amino-1-(5-phospho-D-ribosyl)imidazole-4-carboxylate: step 1/2.</text>
</comment>
<comment type="subcellular location">
    <subcellularLocation>
        <location evidence="2">Plastid</location>
        <location evidence="2">Chloroplast</location>
    </subcellularLocation>
</comment>
<comment type="similarity">
    <text evidence="2">Belongs to the SAICAR synthetase family.</text>
</comment>